<feature type="chain" id="PRO_0000202494" description="25S rRNA (adenine(2142)-N(1))-methyltransferase">
    <location>
        <begin position="1"/>
        <end position="337"/>
    </location>
</feature>
<feature type="binding site" evidence="1">
    <location>
        <position position="180"/>
    </location>
    <ligand>
        <name>S-adenosyl-L-methionine</name>
        <dbReference type="ChEBI" id="CHEBI:59789"/>
    </ligand>
</feature>
<feature type="binding site" evidence="1">
    <location>
        <position position="201"/>
    </location>
    <ligand>
        <name>S-adenosyl-L-methionine</name>
        <dbReference type="ChEBI" id="CHEBI:59789"/>
    </ligand>
</feature>
<feature type="mutagenesis site" description="Abolishes methyltransferase activity." evidence="4">
    <original>G</original>
    <variation>R</variation>
    <location>
        <position position="180"/>
    </location>
</feature>
<feature type="sequence conflict" description="In Ref. 1; CAA85099 and 2; CAA55538." evidence="5" ref="1 2">
    <original>P</original>
    <variation>S</variation>
    <location>
        <position position="312"/>
    </location>
</feature>
<keyword id="KW-0489">Methyltransferase</keyword>
<keyword id="KW-0539">Nucleus</keyword>
<keyword id="KW-1185">Reference proteome</keyword>
<keyword id="KW-0949">S-adenosyl-L-methionine</keyword>
<keyword id="KW-0808">Transferase</keyword>
<proteinExistence type="evidence at protein level"/>
<sequence length="337" mass="38550">MHSRKSKSITGKRKQVGSNVTRVIKPQKTRRIIRRFHHLINKRQSICKFLCLKENLDDSNEEKNDKIIRLSIKGNVRLGKYYEDGKSQSFNDAMESQLLRLHSLIKNESKSKDTSDLAVMYTLLGYIMNQINKLGGLETYQIASQNGQLKERGGDTSKLLEKWIRSSFENCPGAVALEIGSLSSGNRISRCALFRNVVRIDLEEHEGVIKQDFMERPLPRNENDKFDLISCSLVLNFVKNHRDRGAMCHRMVKFLKPQGYIFIVLPQACVTHSRYCDKTLLQNLLGSIGLIMLNSHQSNKLYYCLYQLQVVPPQPSSFSKRIKVNDGPGLNNFGITL</sequence>
<gene>
    <name evidence="1" type="primary">BMT2</name>
    <name type="ordered locus">YBR141C</name>
    <name type="ORF">YBR1118</name>
</gene>
<protein>
    <recommendedName>
        <fullName evidence="1">25S rRNA (adenine(2142)-N(1))-methyltransferase</fullName>
        <ecNumber evidence="1">2.1.1.286</ecNumber>
    </recommendedName>
    <alternativeName>
        <fullName evidence="1">Base MethylTransferase of 25S RNA</fullName>
    </alternativeName>
</protein>
<dbReference type="EC" id="2.1.1.286" evidence="1"/>
<dbReference type="EMBL" id="Z36010">
    <property type="protein sequence ID" value="CAA85099.1"/>
    <property type="molecule type" value="Genomic_DNA"/>
</dbReference>
<dbReference type="EMBL" id="X78937">
    <property type="protein sequence ID" value="CAA55538.1"/>
    <property type="molecule type" value="Genomic_DNA"/>
</dbReference>
<dbReference type="EMBL" id="BK006936">
    <property type="protein sequence ID" value="DAA07257.2"/>
    <property type="molecule type" value="Genomic_DNA"/>
</dbReference>
<dbReference type="PIR" id="S46010">
    <property type="entry name" value="S46010"/>
</dbReference>
<dbReference type="RefSeq" id="NP_009699.2">
    <property type="nucleotide sequence ID" value="NM_001178489.2"/>
</dbReference>
<dbReference type="BioGRID" id="32841">
    <property type="interactions" value="193"/>
</dbReference>
<dbReference type="DIP" id="DIP-1766N"/>
<dbReference type="FunCoup" id="P38278">
    <property type="interactions" value="125"/>
</dbReference>
<dbReference type="IntAct" id="P38278">
    <property type="interactions" value="4"/>
</dbReference>
<dbReference type="MINT" id="P38278"/>
<dbReference type="STRING" id="4932.YBR141C"/>
<dbReference type="PaxDb" id="4932-YBR141C"/>
<dbReference type="PeptideAtlas" id="P38278"/>
<dbReference type="EnsemblFungi" id="YBR141C_mRNA">
    <property type="protein sequence ID" value="YBR141C"/>
    <property type="gene ID" value="YBR141C"/>
</dbReference>
<dbReference type="GeneID" id="852438"/>
<dbReference type="KEGG" id="sce:YBR141C"/>
<dbReference type="AGR" id="SGD:S000000345"/>
<dbReference type="SGD" id="S000000345">
    <property type="gene designation" value="BMT2"/>
</dbReference>
<dbReference type="VEuPathDB" id="FungiDB:YBR141C"/>
<dbReference type="eggNOG" id="ENOG502R82D">
    <property type="taxonomic scope" value="Eukaryota"/>
</dbReference>
<dbReference type="HOGENOM" id="CLU_041583_1_0_1"/>
<dbReference type="InParanoid" id="P38278"/>
<dbReference type="OMA" id="FHRTSKW"/>
<dbReference type="OrthoDB" id="5954793at2759"/>
<dbReference type="BioCyc" id="YEAST:G3O-29095-MONOMER"/>
<dbReference type="BioGRID-ORCS" id="852438">
    <property type="hits" value="2 hits in 10 CRISPR screens"/>
</dbReference>
<dbReference type="PRO" id="PR:P38278"/>
<dbReference type="Proteomes" id="UP000002311">
    <property type="component" value="Chromosome II"/>
</dbReference>
<dbReference type="RNAct" id="P38278">
    <property type="molecule type" value="protein"/>
</dbReference>
<dbReference type="GO" id="GO:0005730">
    <property type="term" value="C:nucleolus"/>
    <property type="evidence" value="ECO:0000314"/>
    <property type="project" value="SGD"/>
</dbReference>
<dbReference type="GO" id="GO:0016433">
    <property type="term" value="F:rRNA (adenine) methyltransferase activity"/>
    <property type="evidence" value="ECO:0000315"/>
    <property type="project" value="SGD"/>
</dbReference>
<dbReference type="GO" id="GO:0008757">
    <property type="term" value="F:S-adenosylmethionine-dependent methyltransferase activity"/>
    <property type="evidence" value="ECO:0000255"/>
    <property type="project" value="SGD"/>
</dbReference>
<dbReference type="FunFam" id="3.40.50.150:FF:000656">
    <property type="entry name" value="25S rRNA (adenine(2142)-N(1))-methyltransferase"/>
    <property type="match status" value="1"/>
</dbReference>
<dbReference type="Gene3D" id="3.40.50.150">
    <property type="entry name" value="Vaccinia Virus protein VP39"/>
    <property type="match status" value="1"/>
</dbReference>
<dbReference type="HAMAP" id="MF_03044">
    <property type="entry name" value="BMT2"/>
    <property type="match status" value="1"/>
</dbReference>
<dbReference type="InterPro" id="IPR021867">
    <property type="entry name" value="Bmt2/SAMTOR"/>
</dbReference>
<dbReference type="InterPro" id="IPR029063">
    <property type="entry name" value="SAM-dependent_MTases_sf"/>
</dbReference>
<dbReference type="PANTHER" id="PTHR21008:SF1">
    <property type="entry name" value="25S RRNA (ADENINE(2142)-N(1))-METHYLTRANSFERASE"/>
    <property type="match status" value="1"/>
</dbReference>
<dbReference type="PANTHER" id="PTHR21008">
    <property type="entry name" value="S-ADENOSYLMETHIONINE SENSOR UPSTREAM OF MTORC1-RELATED"/>
    <property type="match status" value="1"/>
</dbReference>
<dbReference type="Pfam" id="PF11968">
    <property type="entry name" value="Bmt2"/>
    <property type="match status" value="1"/>
</dbReference>
<dbReference type="SUPFAM" id="SSF53335">
    <property type="entry name" value="S-adenosyl-L-methionine-dependent methyltransferases"/>
    <property type="match status" value="1"/>
</dbReference>
<evidence type="ECO:0000255" key="1">
    <source>
        <dbReference type="HAMAP-Rule" id="MF_03044"/>
    </source>
</evidence>
<evidence type="ECO:0000269" key="2">
    <source>
    </source>
</evidence>
<evidence type="ECO:0000269" key="3">
    <source>
    </source>
</evidence>
<evidence type="ECO:0000269" key="4">
    <source>
    </source>
</evidence>
<evidence type="ECO:0000305" key="5"/>
<accession>P38278</accession>
<accession>D6VQD7</accession>
<name>BMT2_YEAST</name>
<comment type="function">
    <text evidence="1 4">S-adenosyl-L-methionine-dependent methyltransferase that specifically methylates the N(1) position of adenine 2142 in 25S rRNA. N(1)-methyladenine(2142) in 25S rRNA is present in helix 65, a region that accounts for most of the intersubunit surface of the large subunit.</text>
</comment>
<comment type="catalytic activity">
    <reaction evidence="1 4">
        <text>adenosine(2142) in 25S rRNA + S-adenosyl-L-methionine = N(1)-methyladenosine(2142) in 25S rRNA + S-adenosyl-L-homocysteine + H(+)</text>
        <dbReference type="Rhea" id="RHEA:43784"/>
        <dbReference type="Rhea" id="RHEA-COMP:10691"/>
        <dbReference type="Rhea" id="RHEA-COMP:10692"/>
        <dbReference type="ChEBI" id="CHEBI:15378"/>
        <dbReference type="ChEBI" id="CHEBI:57856"/>
        <dbReference type="ChEBI" id="CHEBI:59789"/>
        <dbReference type="ChEBI" id="CHEBI:74411"/>
        <dbReference type="ChEBI" id="CHEBI:74491"/>
        <dbReference type="EC" id="2.1.1.286"/>
    </reaction>
</comment>
<comment type="subcellular location">
    <subcellularLocation>
        <location evidence="1 2 4">Nucleus</location>
        <location evidence="1 2 4">Nucleolus</location>
    </subcellularLocation>
</comment>
<comment type="disruption phenotype">
    <text evidence="4">Loss of N(1)-methyladenine(2142) in 25S rRNA. Confers anisomycin and peroxide sensitivity to the cells as well as slight defects in ribosome subunit joining.</text>
</comment>
<comment type="miscellaneous">
    <text evidence="3">Present with 623 molecules/cell in log phase SD medium.</text>
</comment>
<comment type="similarity">
    <text evidence="1">Belongs to the BMT2 family.</text>
</comment>
<reference key="1">
    <citation type="journal article" date="1994" name="Yeast">
        <title>The sequence of 12.5 kb from the right arm of chromosome II predicts a new N-terminal sequence for the IRA1 protein and reveals two new genes, one of which is a DEAD-box helicase.</title>
        <authorList>
            <person name="Zagulski M."/>
            <person name="Becam A.-M."/>
            <person name="Grzybowska E."/>
            <person name="Lacroute F."/>
            <person name="Migdalski A."/>
            <person name="Slonimski P.P."/>
            <person name="Sokolowska B."/>
            <person name="Herbert C.J."/>
        </authorList>
    </citation>
    <scope>NUCLEOTIDE SEQUENCE [GENOMIC DNA]</scope>
    <source>
        <strain>ATCC 204508 / S288c</strain>
    </source>
</reference>
<reference key="2">
    <citation type="journal article" date="1994" name="EMBO J.">
        <title>Complete DNA sequence of yeast chromosome II.</title>
        <authorList>
            <person name="Feldmann H."/>
            <person name="Aigle M."/>
            <person name="Aljinovic G."/>
            <person name="Andre B."/>
            <person name="Baclet M.C."/>
            <person name="Barthe C."/>
            <person name="Baur A."/>
            <person name="Becam A.-M."/>
            <person name="Biteau N."/>
            <person name="Boles E."/>
            <person name="Brandt T."/>
            <person name="Brendel M."/>
            <person name="Brueckner M."/>
            <person name="Bussereau F."/>
            <person name="Christiansen C."/>
            <person name="Contreras R."/>
            <person name="Crouzet M."/>
            <person name="Cziepluch C."/>
            <person name="Demolis N."/>
            <person name="Delaveau T."/>
            <person name="Doignon F."/>
            <person name="Domdey H."/>
            <person name="Duesterhus S."/>
            <person name="Dubois E."/>
            <person name="Dujon B."/>
            <person name="El Bakkoury M."/>
            <person name="Entian K.-D."/>
            <person name="Feuermann M."/>
            <person name="Fiers W."/>
            <person name="Fobo G.M."/>
            <person name="Fritz C."/>
            <person name="Gassenhuber J."/>
            <person name="Glansdorff N."/>
            <person name="Goffeau A."/>
            <person name="Grivell L.A."/>
            <person name="de Haan M."/>
            <person name="Hein C."/>
            <person name="Herbert C.J."/>
            <person name="Hollenberg C.P."/>
            <person name="Holmstroem K."/>
            <person name="Jacq C."/>
            <person name="Jacquet M."/>
            <person name="Jauniaux J.-C."/>
            <person name="Jonniaux J.-L."/>
            <person name="Kallesoee T."/>
            <person name="Kiesau P."/>
            <person name="Kirchrath L."/>
            <person name="Koetter P."/>
            <person name="Korol S."/>
            <person name="Liebl S."/>
            <person name="Logghe M."/>
            <person name="Lohan A.J.E."/>
            <person name="Louis E.J."/>
            <person name="Li Z.Y."/>
            <person name="Maat M.J."/>
            <person name="Mallet L."/>
            <person name="Mannhaupt G."/>
            <person name="Messenguy F."/>
            <person name="Miosga T."/>
            <person name="Molemans F."/>
            <person name="Mueller S."/>
            <person name="Nasr F."/>
            <person name="Obermaier B."/>
            <person name="Perea J."/>
            <person name="Pierard A."/>
            <person name="Piravandi E."/>
            <person name="Pohl F.M."/>
            <person name="Pohl T.M."/>
            <person name="Potier S."/>
            <person name="Proft M."/>
            <person name="Purnelle B."/>
            <person name="Ramezani Rad M."/>
            <person name="Rieger M."/>
            <person name="Rose M."/>
            <person name="Schaaff-Gerstenschlaeger I."/>
            <person name="Scherens B."/>
            <person name="Schwarzlose C."/>
            <person name="Skala J."/>
            <person name="Slonimski P.P."/>
            <person name="Smits P.H.M."/>
            <person name="Souciet J.-L."/>
            <person name="Steensma H.Y."/>
            <person name="Stucka R."/>
            <person name="Urrestarazu L.A."/>
            <person name="van der Aart Q.J.M."/>
            <person name="Van Dyck L."/>
            <person name="Vassarotti A."/>
            <person name="Vetter I."/>
            <person name="Vierendeels F."/>
            <person name="Vissers S."/>
            <person name="Wagner G."/>
            <person name="de Wergifosse P."/>
            <person name="Wolfe K.H."/>
            <person name="Zagulski M."/>
            <person name="Zimmermann F.K."/>
            <person name="Mewes H.-W."/>
            <person name="Kleine K."/>
        </authorList>
    </citation>
    <scope>NUCLEOTIDE SEQUENCE [LARGE SCALE GENOMIC DNA]</scope>
    <source>
        <strain>ATCC 204508 / S288c</strain>
    </source>
</reference>
<reference key="3">
    <citation type="journal article" date="2014" name="G3 (Bethesda)">
        <title>The reference genome sequence of Saccharomyces cerevisiae: Then and now.</title>
        <authorList>
            <person name="Engel S.R."/>
            <person name="Dietrich F.S."/>
            <person name="Fisk D.G."/>
            <person name="Binkley G."/>
            <person name="Balakrishnan R."/>
            <person name="Costanzo M.C."/>
            <person name="Dwight S.S."/>
            <person name="Hitz B.C."/>
            <person name="Karra K."/>
            <person name="Nash R.S."/>
            <person name="Weng S."/>
            <person name="Wong E.D."/>
            <person name="Lloyd P."/>
            <person name="Skrzypek M.S."/>
            <person name="Miyasato S.R."/>
            <person name="Simison M."/>
            <person name="Cherry J.M."/>
        </authorList>
    </citation>
    <scope>GENOME REANNOTATION</scope>
    <scope>SEQUENCE REVISION TO 312</scope>
    <source>
        <strain>ATCC 204508 / S288c</strain>
    </source>
</reference>
<reference key="4">
    <citation type="journal article" date="2003" name="Nature">
        <title>Global analysis of protein localization in budding yeast.</title>
        <authorList>
            <person name="Huh W.-K."/>
            <person name="Falvo J.V."/>
            <person name="Gerke L.C."/>
            <person name="Carroll A.S."/>
            <person name="Howson R.W."/>
            <person name="Weissman J.S."/>
            <person name="O'Shea E.K."/>
        </authorList>
    </citation>
    <scope>SUBCELLULAR LOCATION [LARGE SCALE ANALYSIS]</scope>
</reference>
<reference key="5">
    <citation type="journal article" date="2003" name="Nature">
        <title>Global analysis of protein expression in yeast.</title>
        <authorList>
            <person name="Ghaemmaghami S."/>
            <person name="Huh W.-K."/>
            <person name="Bower K."/>
            <person name="Howson R.W."/>
            <person name="Belle A."/>
            <person name="Dephoure N."/>
            <person name="O'Shea E.K."/>
            <person name="Weissman J.S."/>
        </authorList>
    </citation>
    <scope>LEVEL OF PROTEIN EXPRESSION [LARGE SCALE ANALYSIS]</scope>
</reference>
<reference key="6">
    <citation type="journal article" date="2013" name="Nucleic Acids Res.">
        <title>Identification of a novel methyltransferase, Bmt2, responsible for the N-1-methyl-adenosine base modification of 25S rRNA in Saccharomyces cerevisiae.</title>
        <authorList>
            <person name="Sharma S."/>
            <person name="Watzinger P."/>
            <person name="Kotter P."/>
            <person name="Entian K.D."/>
        </authorList>
    </citation>
    <scope>FUNCTION</scope>
    <scope>CATALYTIC ACTIVITY</scope>
    <scope>SUBCELLULAR LOCATION</scope>
    <scope>MUTAGENESIS OF GLY-180</scope>
    <scope>DISRUPTION PHENOTYPE</scope>
</reference>
<organism>
    <name type="scientific">Saccharomyces cerevisiae (strain ATCC 204508 / S288c)</name>
    <name type="common">Baker's yeast</name>
    <dbReference type="NCBI Taxonomy" id="559292"/>
    <lineage>
        <taxon>Eukaryota</taxon>
        <taxon>Fungi</taxon>
        <taxon>Dikarya</taxon>
        <taxon>Ascomycota</taxon>
        <taxon>Saccharomycotina</taxon>
        <taxon>Saccharomycetes</taxon>
        <taxon>Saccharomycetales</taxon>
        <taxon>Saccharomycetaceae</taxon>
        <taxon>Saccharomyces</taxon>
    </lineage>
</organism>